<organism>
    <name type="scientific">Aster yellows witches'-broom phytoplasma (strain AYWB)</name>
    <dbReference type="NCBI Taxonomy" id="322098"/>
    <lineage>
        <taxon>Bacteria</taxon>
        <taxon>Bacillati</taxon>
        <taxon>Mycoplasmatota</taxon>
        <taxon>Mollicutes</taxon>
        <taxon>Acholeplasmatales</taxon>
        <taxon>Acholeplasmataceae</taxon>
        <taxon>Candidatus Phytoplasma</taxon>
        <taxon>16SrI (Aster yellows group)</taxon>
    </lineage>
</organism>
<accession>Q2NJ40</accession>
<proteinExistence type="inferred from homology"/>
<name>GPMI_AYWBP</name>
<dbReference type="EC" id="5.4.2.12" evidence="1"/>
<dbReference type="EMBL" id="CP000061">
    <property type="protein sequence ID" value="ABC65553.1"/>
    <property type="molecule type" value="Genomic_DNA"/>
</dbReference>
<dbReference type="RefSeq" id="WP_011412717.1">
    <property type="nucleotide sequence ID" value="NC_007716.1"/>
</dbReference>
<dbReference type="SMR" id="Q2NJ40"/>
<dbReference type="STRING" id="322098.AYWB_436"/>
<dbReference type="KEGG" id="ayw:AYWB_436"/>
<dbReference type="eggNOG" id="COG0696">
    <property type="taxonomic scope" value="Bacteria"/>
</dbReference>
<dbReference type="HOGENOM" id="CLU_026099_2_0_14"/>
<dbReference type="OrthoDB" id="9800863at2"/>
<dbReference type="PhylomeDB" id="Q2NJ40"/>
<dbReference type="UniPathway" id="UPA00109">
    <property type="reaction ID" value="UER00186"/>
</dbReference>
<dbReference type="Proteomes" id="UP000001934">
    <property type="component" value="Chromosome"/>
</dbReference>
<dbReference type="GO" id="GO:0005829">
    <property type="term" value="C:cytosol"/>
    <property type="evidence" value="ECO:0007669"/>
    <property type="project" value="TreeGrafter"/>
</dbReference>
<dbReference type="GO" id="GO:0030145">
    <property type="term" value="F:manganese ion binding"/>
    <property type="evidence" value="ECO:0007669"/>
    <property type="project" value="UniProtKB-UniRule"/>
</dbReference>
<dbReference type="GO" id="GO:0004619">
    <property type="term" value="F:phosphoglycerate mutase activity"/>
    <property type="evidence" value="ECO:0007669"/>
    <property type="project" value="UniProtKB-EC"/>
</dbReference>
<dbReference type="GO" id="GO:0006007">
    <property type="term" value="P:glucose catabolic process"/>
    <property type="evidence" value="ECO:0007669"/>
    <property type="project" value="InterPro"/>
</dbReference>
<dbReference type="GO" id="GO:0006096">
    <property type="term" value="P:glycolytic process"/>
    <property type="evidence" value="ECO:0007669"/>
    <property type="project" value="UniProtKB-UniRule"/>
</dbReference>
<dbReference type="CDD" id="cd16010">
    <property type="entry name" value="iPGM"/>
    <property type="match status" value="1"/>
</dbReference>
<dbReference type="FunFam" id="3.40.1450.10:FF:000002">
    <property type="entry name" value="2,3-bisphosphoglycerate-independent phosphoglycerate mutase"/>
    <property type="match status" value="1"/>
</dbReference>
<dbReference type="Gene3D" id="3.40.720.10">
    <property type="entry name" value="Alkaline Phosphatase, subunit A"/>
    <property type="match status" value="1"/>
</dbReference>
<dbReference type="Gene3D" id="3.40.1450.10">
    <property type="entry name" value="BPG-independent phosphoglycerate mutase, domain B"/>
    <property type="match status" value="1"/>
</dbReference>
<dbReference type="HAMAP" id="MF_01038">
    <property type="entry name" value="GpmI"/>
    <property type="match status" value="1"/>
</dbReference>
<dbReference type="InterPro" id="IPR017850">
    <property type="entry name" value="Alkaline_phosphatase_core_sf"/>
</dbReference>
<dbReference type="InterPro" id="IPR011258">
    <property type="entry name" value="BPG-indep_PGM_N"/>
</dbReference>
<dbReference type="InterPro" id="IPR006124">
    <property type="entry name" value="Metalloenzyme"/>
</dbReference>
<dbReference type="InterPro" id="IPR036646">
    <property type="entry name" value="PGAM_B_sf"/>
</dbReference>
<dbReference type="InterPro" id="IPR005995">
    <property type="entry name" value="Pgm_bpd_ind"/>
</dbReference>
<dbReference type="NCBIfam" id="TIGR01307">
    <property type="entry name" value="pgm_bpd_ind"/>
    <property type="match status" value="1"/>
</dbReference>
<dbReference type="PANTHER" id="PTHR31637">
    <property type="entry name" value="2,3-BISPHOSPHOGLYCERATE-INDEPENDENT PHOSPHOGLYCERATE MUTASE"/>
    <property type="match status" value="1"/>
</dbReference>
<dbReference type="PANTHER" id="PTHR31637:SF0">
    <property type="entry name" value="2,3-BISPHOSPHOGLYCERATE-INDEPENDENT PHOSPHOGLYCERATE MUTASE"/>
    <property type="match status" value="1"/>
</dbReference>
<dbReference type="Pfam" id="PF06415">
    <property type="entry name" value="iPGM_N"/>
    <property type="match status" value="1"/>
</dbReference>
<dbReference type="Pfam" id="PF01676">
    <property type="entry name" value="Metalloenzyme"/>
    <property type="match status" value="1"/>
</dbReference>
<dbReference type="PIRSF" id="PIRSF001492">
    <property type="entry name" value="IPGAM"/>
    <property type="match status" value="1"/>
</dbReference>
<dbReference type="SUPFAM" id="SSF64158">
    <property type="entry name" value="2,3-Bisphosphoglycerate-independent phosphoglycerate mutase, substrate-binding domain"/>
    <property type="match status" value="1"/>
</dbReference>
<dbReference type="SUPFAM" id="SSF53649">
    <property type="entry name" value="Alkaline phosphatase-like"/>
    <property type="match status" value="1"/>
</dbReference>
<evidence type="ECO:0000255" key="1">
    <source>
        <dbReference type="HAMAP-Rule" id="MF_01038"/>
    </source>
</evidence>
<reference key="1">
    <citation type="journal article" date="2006" name="J. Bacteriol.">
        <title>Living with genome instability: the adaptation of phytoplasmas to diverse environments of their insect and plant hosts.</title>
        <authorList>
            <person name="Bai X."/>
            <person name="Zhang J."/>
            <person name="Ewing A."/>
            <person name="Miller S.A."/>
            <person name="Jancso Radek A."/>
            <person name="Shevchenko D.V."/>
            <person name="Tsukerman K."/>
            <person name="Walunas T."/>
            <person name="Lapidus A."/>
            <person name="Campbell J.W."/>
            <person name="Hogenhout S.A."/>
        </authorList>
    </citation>
    <scope>NUCLEOTIDE SEQUENCE [LARGE SCALE GENOMIC DNA]</scope>
    <source>
        <strain>AYWB</strain>
    </source>
</reference>
<keyword id="KW-0324">Glycolysis</keyword>
<keyword id="KW-0413">Isomerase</keyword>
<keyword id="KW-0464">Manganese</keyword>
<keyword id="KW-0479">Metal-binding</keyword>
<protein>
    <recommendedName>
        <fullName evidence="1">2,3-bisphosphoglycerate-independent phosphoglycerate mutase</fullName>
        <shortName evidence="1">BPG-independent PGAM</shortName>
        <shortName evidence="1">Phosphoglyceromutase</shortName>
        <shortName evidence="1">iPGM</shortName>
        <ecNumber evidence="1">5.4.2.12</ecNumber>
    </recommendedName>
</protein>
<comment type="function">
    <text evidence="1">Catalyzes the interconversion of 2-phosphoglycerate and 3-phosphoglycerate.</text>
</comment>
<comment type="catalytic activity">
    <reaction evidence="1">
        <text>(2R)-2-phosphoglycerate = (2R)-3-phosphoglycerate</text>
        <dbReference type="Rhea" id="RHEA:15901"/>
        <dbReference type="ChEBI" id="CHEBI:58272"/>
        <dbReference type="ChEBI" id="CHEBI:58289"/>
        <dbReference type="EC" id="5.4.2.12"/>
    </reaction>
</comment>
<comment type="cofactor">
    <cofactor evidence="1">
        <name>Mn(2+)</name>
        <dbReference type="ChEBI" id="CHEBI:29035"/>
    </cofactor>
    <text evidence="1">Binds 2 manganese ions per subunit.</text>
</comment>
<comment type="pathway">
    <text evidence="1">Carbohydrate degradation; glycolysis; pyruvate from D-glyceraldehyde 3-phosphate: step 3/5.</text>
</comment>
<comment type="subunit">
    <text evidence="1">Monomer.</text>
</comment>
<comment type="similarity">
    <text evidence="1">Belongs to the BPG-independent phosphoglycerate mutase family.</text>
</comment>
<feature type="chain" id="PRO_1000063946" description="2,3-bisphosphoglycerate-independent phosphoglycerate mutase">
    <location>
        <begin position="1"/>
        <end position="512"/>
    </location>
</feature>
<feature type="active site" description="Phosphoserine intermediate" evidence="1">
    <location>
        <position position="62"/>
    </location>
</feature>
<feature type="binding site" evidence="1">
    <location>
        <position position="12"/>
    </location>
    <ligand>
        <name>Mn(2+)</name>
        <dbReference type="ChEBI" id="CHEBI:29035"/>
        <label>2</label>
    </ligand>
</feature>
<feature type="binding site" evidence="1">
    <location>
        <position position="62"/>
    </location>
    <ligand>
        <name>Mn(2+)</name>
        <dbReference type="ChEBI" id="CHEBI:29035"/>
        <label>2</label>
    </ligand>
</feature>
<feature type="binding site" evidence="1">
    <location>
        <position position="123"/>
    </location>
    <ligand>
        <name>substrate</name>
    </ligand>
</feature>
<feature type="binding site" evidence="1">
    <location>
        <begin position="154"/>
        <end position="155"/>
    </location>
    <ligand>
        <name>substrate</name>
    </ligand>
</feature>
<feature type="binding site" evidence="1">
    <location>
        <position position="181"/>
    </location>
    <ligand>
        <name>substrate</name>
    </ligand>
</feature>
<feature type="binding site" evidence="1">
    <location>
        <position position="187"/>
    </location>
    <ligand>
        <name>substrate</name>
    </ligand>
</feature>
<feature type="binding site" evidence="1">
    <location>
        <begin position="253"/>
        <end position="256"/>
    </location>
    <ligand>
        <name>substrate</name>
    </ligand>
</feature>
<feature type="binding site" evidence="1">
    <location>
        <position position="336"/>
    </location>
    <ligand>
        <name>substrate</name>
    </ligand>
</feature>
<feature type="binding site" evidence="1">
    <location>
        <position position="403"/>
    </location>
    <ligand>
        <name>Mn(2+)</name>
        <dbReference type="ChEBI" id="CHEBI:29035"/>
        <label>1</label>
    </ligand>
</feature>
<feature type="binding site" evidence="1">
    <location>
        <position position="407"/>
    </location>
    <ligand>
        <name>Mn(2+)</name>
        <dbReference type="ChEBI" id="CHEBI:29035"/>
        <label>1</label>
    </ligand>
</feature>
<feature type="binding site" evidence="1">
    <location>
        <position position="444"/>
    </location>
    <ligand>
        <name>Mn(2+)</name>
        <dbReference type="ChEBI" id="CHEBI:29035"/>
        <label>2</label>
    </ligand>
</feature>
<feature type="binding site" evidence="1">
    <location>
        <position position="445"/>
    </location>
    <ligand>
        <name>Mn(2+)</name>
        <dbReference type="ChEBI" id="CHEBI:29035"/>
        <label>2</label>
    </ligand>
</feature>
<feature type="binding site" evidence="1">
    <location>
        <position position="462"/>
    </location>
    <ligand>
        <name>Mn(2+)</name>
        <dbReference type="ChEBI" id="CHEBI:29035"/>
        <label>1</label>
    </ligand>
</feature>
<sequence>MTKKFVGLIILDGLGLTDQKENNAFHLAKTPYLDYLLKNFPNTTLKASGEEVGLPQGQMGNSEVGHLNLGAGRVVYQSLTQINKAIRDKTFFTNKQFLQAIEHVKKNNSKIHLLGLISDGGIHSHLDHFKALFDLLKENNLANNTFLHAFTDGRDTGTHSGINYIKNLLDYGFNIASVAGRYYALDRDNNWDRINLVYNMLTSKQAPVITLSLEKTMQNFYNQGITDEFITPFITDPNGLIDDNDAVIFVNFRPDRAMRLATALSNPCATNAFCSEGKTNFCGNKLVNNLFLVTMTQYNVQVKSVVAFEKKTLKNIYGEVIANLGMHQLRISETEKYPHVTFFFDGGKELQLKNADRILIPSPKVKTYDLKPEMSALEITNAAKTAIFSRKYDTLILNFANPDMVGHTGFLDATIKAVQTVDSCLKEVLNAIFAVKGKACIVADHGNAEKMKDNQGNPHTAHTTNLVPFIVTDKNVVLKPGSLCDVAPTMLDLLEIKKPQEMTGNSLIKKLV</sequence>
<gene>
    <name evidence="1" type="primary">gpmI</name>
    <name type="ordered locus">AYWB_436</name>
</gene>